<gene>
    <name type="primary">egr2b</name>
    <name type="synonym">egr2</name>
    <name type="synonym">krx-20</name>
    <name type="synonym">krx20</name>
</gene>
<evidence type="ECO:0000255" key="1">
    <source>
        <dbReference type="PROSITE-ProRule" id="PRU00042"/>
    </source>
</evidence>
<evidence type="ECO:0000256" key="2">
    <source>
        <dbReference type="SAM" id="MobiDB-lite"/>
    </source>
</evidence>
<evidence type="ECO:0000305" key="3"/>
<comment type="function">
    <text>Sequence-specific DNA-binding transcription factor. Binds to two specific DNA sites located in the promoter region of HOXA4.</text>
</comment>
<comment type="subcellular location">
    <subcellularLocation>
        <location>Nucleus</location>
    </subcellularLocation>
</comment>
<comment type="developmental stage">
    <text>First detected during late gastrulation, found in the prospective neuroepithelium domain around 100% epiboly and begins to constrict along the neuroaxis by the end of gastrulation - around 10 hours post-fertilization (hpf). By 12 hpf expression is restricted in two regions of the neuroepithelium of the prospective hindbrain; rhombomeres 3 and 5. Around 14 hpf neural crest migration begins from the dorsal surface of R5 moving caudally into R6 and then ventrally towards the pharyngeal arches. Crest migration is not apparent at or after 16 hpf and no migration is seen from R3. Expression is down-regulated first in R3 around 26 hpf and later in R5 around 30 hpf.</text>
</comment>
<comment type="similarity">
    <text evidence="3">Belongs to the EGR C2H2-type zinc-finger protein family.</text>
</comment>
<reference key="1">
    <citation type="journal article" date="1993" name="Nucleic Acids Res.">
        <title>Cloning of the zebrafish krox-20 gene (krx-20) and its expression during hindbrain development.</title>
        <authorList>
            <person name="Oxtoby E."/>
            <person name="Jowett T."/>
        </authorList>
    </citation>
    <scope>NUCLEOTIDE SEQUENCE [MRNA]</scope>
    <source>
        <tissue>Embryo</tissue>
    </source>
</reference>
<proteinExistence type="evidence at transcript level"/>
<protein>
    <recommendedName>
        <fullName>Early growth response protein 2b</fullName>
        <shortName>EGR-2b</shortName>
    </recommendedName>
    <alternativeName>
        <fullName>Protein krx-20</fullName>
    </alternativeName>
    <alternativeName>
        <fullName>Zinc finger protein Krox-20</fullName>
    </alternativeName>
</protein>
<keyword id="KW-0010">Activator</keyword>
<keyword id="KW-0238">DNA-binding</keyword>
<keyword id="KW-0479">Metal-binding</keyword>
<keyword id="KW-0539">Nucleus</keyword>
<keyword id="KW-1185">Reference proteome</keyword>
<keyword id="KW-0677">Repeat</keyword>
<keyword id="KW-0804">Transcription</keyword>
<keyword id="KW-0805">Transcription regulation</keyword>
<keyword id="KW-0862">Zinc</keyword>
<keyword id="KW-0863">Zinc-finger</keyword>
<sequence length="412" mass="45153">MTAKTLEKAPVSLGGFVHPLADSIYSVDELGTTLPASVTIYNDLGGHYEQINAGDGLINGDMSTEKRALDLAYSSTFAQPAGPRNQTFTYMGKFSIDSQYPGNWNPEGVINIVSAGILGMTQPSSASSSPASSVSPSHFSSTLSCTMAQNQADMEHIYSPPPPYSGCGEVYQDPSAFLSTSTCPISYPPPSYSSPKPNADSGLFPIIPDYAGFFQPPCQRDMQSMPDRKPFSCPLDSFKLPPPLTPLNTIRNFTLGGPGPDGPRLPTAYTPQNLPLRPILRPRKYPNRPSKTPVHERPYPCPAEGCDRRFSRSDELTRHIRIHTGHKPFQCRICMRNFSRSDHLTTHIRTHTGEKPFACDFCGRKFARSDERKRHTKIHLRQKERKSSSSSTGVSSSERGVATSICSSSSNQ</sequence>
<feature type="chain" id="PRO_0000047124" description="Early growth response protein 2b">
    <location>
        <begin position="1"/>
        <end position="412"/>
    </location>
</feature>
<feature type="zinc finger region" description="C2H2-type 1" evidence="1">
    <location>
        <begin position="299"/>
        <end position="323"/>
    </location>
</feature>
<feature type="zinc finger region" description="C2H2-type 2" evidence="1">
    <location>
        <begin position="329"/>
        <end position="351"/>
    </location>
</feature>
<feature type="zinc finger region" description="C2H2-type 3" evidence="1">
    <location>
        <begin position="357"/>
        <end position="379"/>
    </location>
</feature>
<feature type="region of interest" description="Disordered" evidence="2">
    <location>
        <begin position="269"/>
        <end position="299"/>
    </location>
</feature>
<feature type="region of interest" description="Disordered" evidence="2">
    <location>
        <begin position="371"/>
        <end position="412"/>
    </location>
</feature>
<feature type="compositionally biased region" description="Basic residues" evidence="2">
    <location>
        <begin position="374"/>
        <end position="384"/>
    </location>
</feature>
<feature type="compositionally biased region" description="Low complexity" evidence="2">
    <location>
        <begin position="388"/>
        <end position="401"/>
    </location>
</feature>
<name>EGR2B_DANRE</name>
<dbReference type="EMBL" id="X70322">
    <property type="protein sequence ID" value="CAA49790.1"/>
    <property type="molecule type" value="mRNA"/>
</dbReference>
<dbReference type="PIR" id="S30299">
    <property type="entry name" value="S30299"/>
</dbReference>
<dbReference type="FunCoup" id="Q05159">
    <property type="interactions" value="241"/>
</dbReference>
<dbReference type="STRING" id="7955.ENSDARP00000062854"/>
<dbReference type="PaxDb" id="7955-ENSDARP00000062854"/>
<dbReference type="AGR" id="ZFIN:ZDB-GENE-980526-283"/>
<dbReference type="ZFIN" id="ZDB-GENE-980526-283">
    <property type="gene designation" value="egr2b"/>
</dbReference>
<dbReference type="eggNOG" id="KOG1721">
    <property type="taxonomic scope" value="Eukaryota"/>
</dbReference>
<dbReference type="InParanoid" id="Q05159"/>
<dbReference type="Reactome" id="R-DRE-9031628">
    <property type="pathway name" value="NGF-stimulated transcription"/>
</dbReference>
<dbReference type="PRO" id="PR:Q05159"/>
<dbReference type="Proteomes" id="UP000000437">
    <property type="component" value="Unplaced"/>
</dbReference>
<dbReference type="GO" id="GO:0005634">
    <property type="term" value="C:nucleus"/>
    <property type="evidence" value="ECO:0007669"/>
    <property type="project" value="UniProtKB-SubCell"/>
</dbReference>
<dbReference type="GO" id="GO:0000981">
    <property type="term" value="F:DNA-binding transcription factor activity, RNA polymerase II-specific"/>
    <property type="evidence" value="ECO:0000318"/>
    <property type="project" value="GO_Central"/>
</dbReference>
<dbReference type="GO" id="GO:0000978">
    <property type="term" value="F:RNA polymerase II cis-regulatory region sequence-specific DNA binding"/>
    <property type="evidence" value="ECO:0000318"/>
    <property type="project" value="GO_Central"/>
</dbReference>
<dbReference type="GO" id="GO:0008270">
    <property type="term" value="F:zinc ion binding"/>
    <property type="evidence" value="ECO:0007669"/>
    <property type="project" value="UniProtKB-KW"/>
</dbReference>
<dbReference type="GO" id="GO:0048568">
    <property type="term" value="P:embryonic organ development"/>
    <property type="evidence" value="ECO:0000315"/>
    <property type="project" value="ZFIN"/>
</dbReference>
<dbReference type="GO" id="GO:0021575">
    <property type="term" value="P:hindbrain morphogenesis"/>
    <property type="evidence" value="ECO:0000315"/>
    <property type="project" value="ZFIN"/>
</dbReference>
<dbReference type="GO" id="GO:0048932">
    <property type="term" value="P:myelination of posterior lateral line nerve axons"/>
    <property type="evidence" value="ECO:0000315"/>
    <property type="project" value="ZFIN"/>
</dbReference>
<dbReference type="GO" id="GO:0006357">
    <property type="term" value="P:regulation of transcription by RNA polymerase II"/>
    <property type="evidence" value="ECO:0000318"/>
    <property type="project" value="GO_Central"/>
</dbReference>
<dbReference type="GO" id="GO:0021654">
    <property type="term" value="P:rhombomere boundary formation"/>
    <property type="evidence" value="ECO:0000315"/>
    <property type="project" value="ZFIN"/>
</dbReference>
<dbReference type="FunFam" id="3.30.160.60:FF:000837">
    <property type="entry name" value="E3 SUMO-protein ligase EGR2 isoform X1"/>
    <property type="match status" value="1"/>
</dbReference>
<dbReference type="FunFam" id="3.30.160.60:FF:000324">
    <property type="entry name" value="Early growth response protein 4"/>
    <property type="match status" value="1"/>
</dbReference>
<dbReference type="FunFam" id="3.30.160.60:FF:000419">
    <property type="entry name" value="Early growth response protein 4"/>
    <property type="match status" value="1"/>
</dbReference>
<dbReference type="Gene3D" id="3.30.160.60">
    <property type="entry name" value="Classic Zinc Finger"/>
    <property type="match status" value="3"/>
</dbReference>
<dbReference type="InterPro" id="IPR021849">
    <property type="entry name" value="EGR_N"/>
</dbReference>
<dbReference type="InterPro" id="IPR036236">
    <property type="entry name" value="Znf_C2H2_sf"/>
</dbReference>
<dbReference type="InterPro" id="IPR013087">
    <property type="entry name" value="Znf_C2H2_type"/>
</dbReference>
<dbReference type="PANTHER" id="PTHR23235:SF54">
    <property type="entry name" value="E3 SUMO-PROTEIN LIGASE EGR2"/>
    <property type="match status" value="1"/>
</dbReference>
<dbReference type="PANTHER" id="PTHR23235">
    <property type="entry name" value="KRUEPPEL-LIKE TRANSCRIPTION FACTOR"/>
    <property type="match status" value="1"/>
</dbReference>
<dbReference type="Pfam" id="PF11928">
    <property type="entry name" value="DUF3446"/>
    <property type="match status" value="1"/>
</dbReference>
<dbReference type="Pfam" id="PF00096">
    <property type="entry name" value="zf-C2H2"/>
    <property type="match status" value="3"/>
</dbReference>
<dbReference type="SMART" id="SM00355">
    <property type="entry name" value="ZnF_C2H2"/>
    <property type="match status" value="3"/>
</dbReference>
<dbReference type="SUPFAM" id="SSF57667">
    <property type="entry name" value="beta-beta-alpha zinc fingers"/>
    <property type="match status" value="2"/>
</dbReference>
<dbReference type="PROSITE" id="PS00028">
    <property type="entry name" value="ZINC_FINGER_C2H2_1"/>
    <property type="match status" value="3"/>
</dbReference>
<dbReference type="PROSITE" id="PS50157">
    <property type="entry name" value="ZINC_FINGER_C2H2_2"/>
    <property type="match status" value="3"/>
</dbReference>
<organism>
    <name type="scientific">Danio rerio</name>
    <name type="common">Zebrafish</name>
    <name type="synonym">Brachydanio rerio</name>
    <dbReference type="NCBI Taxonomy" id="7955"/>
    <lineage>
        <taxon>Eukaryota</taxon>
        <taxon>Metazoa</taxon>
        <taxon>Chordata</taxon>
        <taxon>Craniata</taxon>
        <taxon>Vertebrata</taxon>
        <taxon>Euteleostomi</taxon>
        <taxon>Actinopterygii</taxon>
        <taxon>Neopterygii</taxon>
        <taxon>Teleostei</taxon>
        <taxon>Ostariophysi</taxon>
        <taxon>Cypriniformes</taxon>
        <taxon>Danionidae</taxon>
        <taxon>Danioninae</taxon>
        <taxon>Danio</taxon>
    </lineage>
</organism>
<accession>Q05159</accession>